<reference key="1">
    <citation type="submission" date="2007-03" db="EMBL/GenBank/DDBJ databases">
        <title>Annotation of Culex pipiens quinquefasciatus.</title>
        <authorList>
            <consortium name="The Broad Institute Genome Sequencing Platform"/>
            <person name="Atkinson P.W."/>
            <person name="Hemingway J."/>
            <person name="Christensen B.M."/>
            <person name="Higgs S."/>
            <person name="Kodira C.D."/>
            <person name="Hannick L.I."/>
            <person name="Megy K."/>
            <person name="O'Leary S.B."/>
            <person name="Pearson M."/>
            <person name="Haas B.J."/>
            <person name="Mauceli E."/>
            <person name="Wortman J.R."/>
            <person name="Lee N.H."/>
            <person name="Guigo R."/>
            <person name="Stanke M."/>
            <person name="Alvarado L."/>
            <person name="Amedeo P."/>
            <person name="Antoine C.H."/>
            <person name="Arensburger P."/>
            <person name="Bidwell S.L."/>
            <person name="Crawford M."/>
            <person name="Camaro F."/>
            <person name="Devon K."/>
            <person name="Engels R."/>
            <person name="Hammond M."/>
            <person name="Howarth C."/>
            <person name="Koehrsen M."/>
            <person name="Lawson D."/>
            <person name="Montgomery P."/>
            <person name="Nene V."/>
            <person name="Nusbaum C."/>
            <person name="Puiu D."/>
            <person name="Romero-Severson J."/>
            <person name="Severson D.W."/>
            <person name="Shumway M."/>
            <person name="Sisk P."/>
            <person name="Stolte C."/>
            <person name="Zeng Q."/>
            <person name="Eisenstadt E."/>
            <person name="Fraser-Liggett C.M."/>
            <person name="Strausberg R."/>
            <person name="Galagan J."/>
            <person name="Birren B."/>
            <person name="Collins F.H."/>
        </authorList>
    </citation>
    <scope>NUCLEOTIDE SEQUENCE [LARGE SCALE GENOMIC DNA]</scope>
    <source>
        <strain>JHB</strain>
    </source>
</reference>
<protein>
    <recommendedName>
        <fullName>Bifunctional lysine-specific demethylase and histidyl-hydroxylase NO66</fullName>
        <ecNumber>1.14.11.-</ecNumber>
        <ecNumber>1.14.11.27</ecNumber>
    </recommendedName>
    <alternativeName>
        <fullName>Histone lysine demethylase NO66</fullName>
    </alternativeName>
</protein>
<proteinExistence type="inferred from homology"/>
<name>NO66_CULQU</name>
<dbReference type="EC" id="1.14.11.-"/>
<dbReference type="EC" id="1.14.11.27"/>
<dbReference type="EMBL" id="DS231997">
    <property type="protein sequence ID" value="EDS31020.1"/>
    <property type="molecule type" value="Genomic_DNA"/>
</dbReference>
<dbReference type="RefSeq" id="XP_001849897.1">
    <property type="nucleotide sequence ID" value="XM_001849845.1"/>
</dbReference>
<dbReference type="SMR" id="B0WMG3"/>
<dbReference type="FunCoup" id="B0WMG3">
    <property type="interactions" value="1896"/>
</dbReference>
<dbReference type="STRING" id="7176.B0WMG3"/>
<dbReference type="EnsemblMetazoa" id="CPIJ008401-RA">
    <property type="protein sequence ID" value="CPIJ008401-PA"/>
    <property type="gene ID" value="CPIJ008401"/>
</dbReference>
<dbReference type="KEGG" id="cqu:CpipJ_CPIJ008401"/>
<dbReference type="VEuPathDB" id="VectorBase:CPIJ008401"/>
<dbReference type="VEuPathDB" id="VectorBase:CQUJHB008294"/>
<dbReference type="eggNOG" id="KOG3706">
    <property type="taxonomic scope" value="Eukaryota"/>
</dbReference>
<dbReference type="HOGENOM" id="CLU_013645_4_1_1"/>
<dbReference type="InParanoid" id="B0WMG3"/>
<dbReference type="OMA" id="VYQRNCW"/>
<dbReference type="OrthoDB" id="425950at2759"/>
<dbReference type="PhylomeDB" id="B0WMG3"/>
<dbReference type="Proteomes" id="UP000002320">
    <property type="component" value="Unassembled WGS sequence"/>
</dbReference>
<dbReference type="GO" id="GO:0005730">
    <property type="term" value="C:nucleolus"/>
    <property type="evidence" value="ECO:0007669"/>
    <property type="project" value="TreeGrafter"/>
</dbReference>
<dbReference type="GO" id="GO:0005634">
    <property type="term" value="C:nucleus"/>
    <property type="evidence" value="ECO:0000250"/>
    <property type="project" value="UniProtKB"/>
</dbReference>
<dbReference type="GO" id="GO:0016706">
    <property type="term" value="F:2-oxoglutarate-dependent dioxygenase activity"/>
    <property type="evidence" value="ECO:0000250"/>
    <property type="project" value="UniProtKB"/>
</dbReference>
<dbReference type="GO" id="GO:0051864">
    <property type="term" value="F:histone H3K36 demethylase activity"/>
    <property type="evidence" value="ECO:0000250"/>
    <property type="project" value="UniProtKB"/>
</dbReference>
<dbReference type="GO" id="GO:0140680">
    <property type="term" value="F:histone H3K36me/H3K36me2 demethylase activity"/>
    <property type="evidence" value="ECO:0007669"/>
    <property type="project" value="UniProtKB-EC"/>
</dbReference>
<dbReference type="GO" id="GO:0034647">
    <property type="term" value="F:histone H3K4me/H3K4me2/H3K4me3 demethylase activity"/>
    <property type="evidence" value="ECO:0000250"/>
    <property type="project" value="UniProtKB"/>
</dbReference>
<dbReference type="GO" id="GO:0005506">
    <property type="term" value="F:iron ion binding"/>
    <property type="evidence" value="ECO:0000250"/>
    <property type="project" value="UniProtKB"/>
</dbReference>
<dbReference type="GO" id="GO:0045892">
    <property type="term" value="P:negative regulation of DNA-templated transcription"/>
    <property type="evidence" value="ECO:0000250"/>
    <property type="project" value="UniProtKB"/>
</dbReference>
<dbReference type="FunFam" id="2.60.120.650:FF:000013">
    <property type="entry name" value="Ribosomal oxygenase 1"/>
    <property type="match status" value="1"/>
</dbReference>
<dbReference type="FunFam" id="1.10.10.1500:FF:000001">
    <property type="entry name" value="ribosomal oxygenase 1 isoform X1"/>
    <property type="match status" value="1"/>
</dbReference>
<dbReference type="FunFam" id="3.90.930.40:FF:000001">
    <property type="entry name" value="ribosomal oxygenase 1 isoform X1"/>
    <property type="match status" value="1"/>
</dbReference>
<dbReference type="Gene3D" id="3.90.930.40">
    <property type="match status" value="1"/>
</dbReference>
<dbReference type="Gene3D" id="2.60.120.650">
    <property type="entry name" value="Cupin"/>
    <property type="match status" value="1"/>
</dbReference>
<dbReference type="Gene3D" id="1.10.10.1500">
    <property type="entry name" value="JmjC domain-containing ribosomal oxygenase (ROX), dimer domain"/>
    <property type="match status" value="1"/>
</dbReference>
<dbReference type="InterPro" id="IPR003347">
    <property type="entry name" value="JmjC_dom"/>
</dbReference>
<dbReference type="InterPro" id="IPR039994">
    <property type="entry name" value="NO66-like"/>
</dbReference>
<dbReference type="InterPro" id="IPR049043">
    <property type="entry name" value="RIOX1/NO66-like_C_WH"/>
</dbReference>
<dbReference type="PANTHER" id="PTHR13096">
    <property type="entry name" value="MINA53 MYC INDUCED NUCLEAR ANTIGEN"/>
    <property type="match status" value="1"/>
</dbReference>
<dbReference type="PANTHER" id="PTHR13096:SF8">
    <property type="entry name" value="RIBOSOMAL OXYGENASE 1"/>
    <property type="match status" value="1"/>
</dbReference>
<dbReference type="Pfam" id="PF08007">
    <property type="entry name" value="JmjC_2"/>
    <property type="match status" value="1"/>
</dbReference>
<dbReference type="Pfam" id="PF21233">
    <property type="entry name" value="RIOX1_C_WH"/>
    <property type="match status" value="1"/>
</dbReference>
<dbReference type="SUPFAM" id="SSF51197">
    <property type="entry name" value="Clavaminate synthase-like"/>
    <property type="match status" value="1"/>
</dbReference>
<dbReference type="PROSITE" id="PS51184">
    <property type="entry name" value="JMJC"/>
    <property type="match status" value="1"/>
</dbReference>
<accession>B0WMG3</accession>
<sequence>MSKVSSIFDTPAPDPRPATTENGAAAKPAARKKKSPAAATKKQLIDQLIREMSQDEDNNDSVDQAPPAKKSRKKADSSGNNNTSKSSVKDKPAKPKKPKTAGLKIKLQDHRKHKEKLRKSLQGVENSRQAAASTSMLEASFNGDSLKDRSNHSTPVHHKGAKAAKKNKNKSHIMPLPLTFTPSKVVVKQEPKTPRRPTMLNVEASSGSLDSVEIGREKFSWVIGPSTTVDEFMAQFWEKKPFLVQRNDPTYYANLLSRGKIDEMLRNNNIEYTKNLDVTSYREGVRETHNPDGRALPPDVWAFYEEGCSIRMLNPQTYLPGVYEMNVKLQEFFHCMTGSNFYLTPPNSQGFAPHYDDIEAFVLQVEGRKHWKLYSPRTASEVLARVSSPNFTQEEIGVPILEVTLEPGDLLYFPRGIIHQASTVPGHHSLHVTMSVYQKNSWADLLELYLPHALSQAAENHLELRRGIPQDLHQHFGIVHSDNETPTRKDLIKKIKSLVDKIFSEEAIDVAVDQLAKRFQHDALPPLLTDQERAQTAYGANYAFNPDGTVPLQTAFTERTTIRLLRRNIVRLVNEENTLRLYYHTENSREYHEYEPNFLEVDQDAALGVELLVKIYPETVAIGALPVEDKVEFAKSLWEKGLIVARGE</sequence>
<comment type="function">
    <text evidence="1">Oxygenase that can act as both a histone lysine demethylase and a ribosomal histidine hydroxylase. Specifically demethylates 'Lys-4' (H3K4me) and 'Lys-36' (H3K36me) of histone H3, thereby playing a central role in histone code (By similarity).</text>
</comment>
<comment type="catalytic activity">
    <reaction>
        <text>N(6),N(6)-dimethyl-L-lysyl(36)-[histone H3] + 2 2-oxoglutarate + 2 O2 = L-lysyl(36)-[histone H3] + 2 formaldehyde + 2 succinate + 2 CO2</text>
        <dbReference type="Rhea" id="RHEA:42032"/>
        <dbReference type="Rhea" id="RHEA-COMP:9785"/>
        <dbReference type="Rhea" id="RHEA-COMP:9787"/>
        <dbReference type="ChEBI" id="CHEBI:15379"/>
        <dbReference type="ChEBI" id="CHEBI:16526"/>
        <dbReference type="ChEBI" id="CHEBI:16810"/>
        <dbReference type="ChEBI" id="CHEBI:16842"/>
        <dbReference type="ChEBI" id="CHEBI:29969"/>
        <dbReference type="ChEBI" id="CHEBI:30031"/>
        <dbReference type="ChEBI" id="CHEBI:61976"/>
        <dbReference type="EC" id="1.14.11.27"/>
    </reaction>
</comment>
<comment type="cofactor">
    <cofactor evidence="1">
        <name>Fe(2+)</name>
        <dbReference type="ChEBI" id="CHEBI:29033"/>
    </cofactor>
    <text evidence="1">Binds 1 Fe(2+) ion per subunit.</text>
</comment>
<comment type="subcellular location">
    <subcellularLocation>
        <location evidence="1">Nucleus</location>
    </subcellularLocation>
</comment>
<comment type="similarity">
    <text evidence="4">Belongs to the ROX family. NO66 subfamily.</text>
</comment>
<organism>
    <name type="scientific">Culex quinquefasciatus</name>
    <name type="common">Southern house mosquito</name>
    <name type="synonym">Culex pungens</name>
    <dbReference type="NCBI Taxonomy" id="7176"/>
    <lineage>
        <taxon>Eukaryota</taxon>
        <taxon>Metazoa</taxon>
        <taxon>Ecdysozoa</taxon>
        <taxon>Arthropoda</taxon>
        <taxon>Hexapoda</taxon>
        <taxon>Insecta</taxon>
        <taxon>Pterygota</taxon>
        <taxon>Neoptera</taxon>
        <taxon>Endopterygota</taxon>
        <taxon>Diptera</taxon>
        <taxon>Nematocera</taxon>
        <taxon>Culicoidea</taxon>
        <taxon>Culicidae</taxon>
        <taxon>Culicinae</taxon>
        <taxon>Culicini</taxon>
        <taxon>Culex</taxon>
        <taxon>Culex</taxon>
    </lineage>
</organism>
<feature type="chain" id="PRO_0000390983" description="Bifunctional lysine-specific demethylase and histidyl-hydroxylase NO66">
    <location>
        <begin position="1"/>
        <end position="648"/>
    </location>
</feature>
<feature type="domain" description="JmjC" evidence="2">
    <location>
        <begin position="308"/>
        <end position="453"/>
    </location>
</feature>
<feature type="region of interest" description="Disordered" evidence="3">
    <location>
        <begin position="1"/>
        <end position="168"/>
    </location>
</feature>
<feature type="compositionally biased region" description="Low complexity" evidence="3">
    <location>
        <begin position="17"/>
        <end position="28"/>
    </location>
</feature>
<feature type="compositionally biased region" description="Basic residues" evidence="3">
    <location>
        <begin position="109"/>
        <end position="119"/>
    </location>
</feature>
<feature type="compositionally biased region" description="Polar residues" evidence="3">
    <location>
        <begin position="123"/>
        <end position="137"/>
    </location>
</feature>
<feature type="compositionally biased region" description="Basic residues" evidence="3">
    <location>
        <begin position="155"/>
        <end position="168"/>
    </location>
</feature>
<feature type="binding site" evidence="2">
    <location>
        <position position="354"/>
    </location>
    <ligand>
        <name>Fe cation</name>
        <dbReference type="ChEBI" id="CHEBI:24875"/>
        <note>catalytic</note>
    </ligand>
</feature>
<feature type="binding site" evidence="2">
    <location>
        <position position="356"/>
    </location>
    <ligand>
        <name>Fe cation</name>
        <dbReference type="ChEBI" id="CHEBI:24875"/>
        <note>catalytic</note>
    </ligand>
</feature>
<feature type="binding site" evidence="2">
    <location>
        <position position="419"/>
    </location>
    <ligand>
        <name>Fe cation</name>
        <dbReference type="ChEBI" id="CHEBI:24875"/>
        <note>catalytic</note>
    </ligand>
</feature>
<gene>
    <name type="ORF">CPIJ008401</name>
</gene>
<keyword id="KW-0156">Chromatin regulator</keyword>
<keyword id="KW-0223">Dioxygenase</keyword>
<keyword id="KW-0408">Iron</keyword>
<keyword id="KW-0479">Metal-binding</keyword>
<keyword id="KW-0539">Nucleus</keyword>
<keyword id="KW-0560">Oxidoreductase</keyword>
<keyword id="KW-1185">Reference proteome</keyword>
<keyword id="KW-0678">Repressor</keyword>
<keyword id="KW-0804">Transcription</keyword>
<keyword id="KW-0805">Transcription regulation</keyword>
<evidence type="ECO:0000250" key="1"/>
<evidence type="ECO:0000255" key="2">
    <source>
        <dbReference type="PROSITE-ProRule" id="PRU00538"/>
    </source>
</evidence>
<evidence type="ECO:0000256" key="3">
    <source>
        <dbReference type="SAM" id="MobiDB-lite"/>
    </source>
</evidence>
<evidence type="ECO:0000305" key="4"/>